<dbReference type="EC" id="1.11.1.28" evidence="2"/>
<dbReference type="EMBL" id="CP000494">
    <property type="protein sequence ID" value="ABQ37807.1"/>
    <property type="molecule type" value="Genomic_DNA"/>
</dbReference>
<dbReference type="RefSeq" id="WP_012045766.1">
    <property type="nucleotide sequence ID" value="NC_009485.1"/>
</dbReference>
<dbReference type="SMR" id="A5ENR3"/>
<dbReference type="STRING" id="288000.BBta_5864"/>
<dbReference type="PeroxiBase" id="4607">
    <property type="entry name" value="BRspAhpD_BTAi1"/>
</dbReference>
<dbReference type="KEGG" id="bbt:BBta_5864"/>
<dbReference type="eggNOG" id="COG2128">
    <property type="taxonomic scope" value="Bacteria"/>
</dbReference>
<dbReference type="HOGENOM" id="CLU_105328_0_0_5"/>
<dbReference type="OrthoDB" id="9801997at2"/>
<dbReference type="Proteomes" id="UP000000246">
    <property type="component" value="Chromosome"/>
</dbReference>
<dbReference type="GO" id="GO:0008785">
    <property type="term" value="F:alkyl hydroperoxide reductase activity"/>
    <property type="evidence" value="ECO:0007669"/>
    <property type="project" value="UniProtKB-UniRule"/>
</dbReference>
<dbReference type="GO" id="GO:0015036">
    <property type="term" value="F:disulfide oxidoreductase activity"/>
    <property type="evidence" value="ECO:0007669"/>
    <property type="project" value="TreeGrafter"/>
</dbReference>
<dbReference type="GO" id="GO:0032843">
    <property type="term" value="F:hydroperoxide reductase activity"/>
    <property type="evidence" value="ECO:0007669"/>
    <property type="project" value="InterPro"/>
</dbReference>
<dbReference type="GO" id="GO:0051920">
    <property type="term" value="F:peroxiredoxin activity"/>
    <property type="evidence" value="ECO:0007669"/>
    <property type="project" value="InterPro"/>
</dbReference>
<dbReference type="GO" id="GO:0045454">
    <property type="term" value="P:cell redox homeostasis"/>
    <property type="evidence" value="ECO:0007669"/>
    <property type="project" value="TreeGrafter"/>
</dbReference>
<dbReference type="GO" id="GO:0006979">
    <property type="term" value="P:response to oxidative stress"/>
    <property type="evidence" value="ECO:0007669"/>
    <property type="project" value="InterPro"/>
</dbReference>
<dbReference type="Gene3D" id="1.20.1290.10">
    <property type="entry name" value="AhpD-like"/>
    <property type="match status" value="1"/>
</dbReference>
<dbReference type="HAMAP" id="MF_01676">
    <property type="entry name" value="AhpD"/>
    <property type="match status" value="1"/>
</dbReference>
<dbReference type="InterPro" id="IPR004674">
    <property type="entry name" value="AhpD"/>
</dbReference>
<dbReference type="InterPro" id="IPR029032">
    <property type="entry name" value="AhpD-like"/>
</dbReference>
<dbReference type="InterPro" id="IPR004675">
    <property type="entry name" value="AhpD_core"/>
</dbReference>
<dbReference type="InterPro" id="IPR003779">
    <property type="entry name" value="CMD-like"/>
</dbReference>
<dbReference type="NCBIfam" id="TIGR00777">
    <property type="entry name" value="ahpD"/>
    <property type="match status" value="1"/>
</dbReference>
<dbReference type="NCBIfam" id="TIGR00778">
    <property type="entry name" value="ahpD_dom"/>
    <property type="match status" value="1"/>
</dbReference>
<dbReference type="PANTHER" id="PTHR33930">
    <property type="entry name" value="ALKYL HYDROPEROXIDE REDUCTASE AHPD"/>
    <property type="match status" value="1"/>
</dbReference>
<dbReference type="PANTHER" id="PTHR33930:SF7">
    <property type="entry name" value="ALKYL HYDROPEROXIDE REDUCTASE AHPD"/>
    <property type="match status" value="1"/>
</dbReference>
<dbReference type="Pfam" id="PF02627">
    <property type="entry name" value="CMD"/>
    <property type="match status" value="1"/>
</dbReference>
<dbReference type="SUPFAM" id="SSF69118">
    <property type="entry name" value="AhpD-like"/>
    <property type="match status" value="1"/>
</dbReference>
<accession>A5ENR3</accession>
<keyword id="KW-0049">Antioxidant</keyword>
<keyword id="KW-1015">Disulfide bond</keyword>
<keyword id="KW-0560">Oxidoreductase</keyword>
<keyword id="KW-0575">Peroxidase</keyword>
<keyword id="KW-0676">Redox-active center</keyword>
<keyword id="KW-1185">Reference proteome</keyword>
<protein>
    <recommendedName>
        <fullName evidence="2">Alkyl hydroperoxide reductase AhpD</fullName>
        <ecNumber evidence="2">1.11.1.28</ecNumber>
    </recommendedName>
    <alternativeName>
        <fullName evidence="2">Alkylhydroperoxidase AhpD</fullName>
    </alternativeName>
</protein>
<name>AHPD_BRASB</name>
<feature type="chain" id="PRO_0000359474" description="Alkyl hydroperoxide reductase AhpD">
    <location>
        <begin position="1"/>
        <end position="181"/>
    </location>
</feature>
<feature type="active site" description="Proton donor" evidence="2">
    <location>
        <position position="131"/>
    </location>
</feature>
<feature type="active site" description="Cysteine sulfenic acid (-SOH) intermediate" evidence="2">
    <location>
        <position position="134"/>
    </location>
</feature>
<feature type="disulfide bond" evidence="1">
    <location>
        <begin position="131"/>
        <end position="134"/>
    </location>
</feature>
<feature type="disulfide bond" description="Interchain (with AhpC); in linked form" evidence="2">
    <location>
        <position position="134"/>
    </location>
</feature>
<reference key="1">
    <citation type="journal article" date="2007" name="Science">
        <title>Legumes symbioses: absence of nod genes in photosynthetic bradyrhizobia.</title>
        <authorList>
            <person name="Giraud E."/>
            <person name="Moulin L."/>
            <person name="Vallenet D."/>
            <person name="Barbe V."/>
            <person name="Cytryn E."/>
            <person name="Avarre J.-C."/>
            <person name="Jaubert M."/>
            <person name="Simon D."/>
            <person name="Cartieaux F."/>
            <person name="Prin Y."/>
            <person name="Bena G."/>
            <person name="Hannibal L."/>
            <person name="Fardoux J."/>
            <person name="Kojadinovic M."/>
            <person name="Vuillet L."/>
            <person name="Lajus A."/>
            <person name="Cruveiller S."/>
            <person name="Rouy Z."/>
            <person name="Mangenot S."/>
            <person name="Segurens B."/>
            <person name="Dossat C."/>
            <person name="Franck W.L."/>
            <person name="Chang W.-S."/>
            <person name="Saunders E."/>
            <person name="Bruce D."/>
            <person name="Richardson P."/>
            <person name="Normand P."/>
            <person name="Dreyfus B."/>
            <person name="Pignol D."/>
            <person name="Stacey G."/>
            <person name="Emerich D."/>
            <person name="Vermeglio A."/>
            <person name="Medigue C."/>
            <person name="Sadowsky M."/>
        </authorList>
    </citation>
    <scope>NUCLEOTIDE SEQUENCE [LARGE SCALE GENOMIC DNA]</scope>
    <source>
        <strain>BTAi1 / ATCC BAA-1182</strain>
    </source>
</reference>
<gene>
    <name evidence="2" type="primary">ahpD</name>
    <name type="ordered locus">BBta_5864</name>
</gene>
<evidence type="ECO:0000250" key="1"/>
<evidence type="ECO:0000255" key="2">
    <source>
        <dbReference type="HAMAP-Rule" id="MF_01676"/>
    </source>
</evidence>
<comment type="function">
    <text evidence="2">Antioxidant protein with alkyl hydroperoxidase activity. Required for the reduction of the AhpC active site cysteine residues and for the regeneration of the AhpC enzyme activity.</text>
</comment>
<comment type="catalytic activity">
    <reaction evidence="2">
        <text>N(6)-[(R)-dihydrolipoyl]-L-lysyl-[lipoyl-carrier protein] + a hydroperoxide = N(6)-[(R)-lipoyl]-L-lysyl-[lipoyl-carrier protein] + an alcohol + H2O</text>
        <dbReference type="Rhea" id="RHEA:62636"/>
        <dbReference type="Rhea" id="RHEA-COMP:10502"/>
        <dbReference type="Rhea" id="RHEA-COMP:16355"/>
        <dbReference type="ChEBI" id="CHEBI:15377"/>
        <dbReference type="ChEBI" id="CHEBI:30879"/>
        <dbReference type="ChEBI" id="CHEBI:35924"/>
        <dbReference type="ChEBI" id="CHEBI:83099"/>
        <dbReference type="ChEBI" id="CHEBI:83100"/>
        <dbReference type="EC" id="1.11.1.28"/>
    </reaction>
</comment>
<comment type="similarity">
    <text evidence="2">Belongs to the AhpD family.</text>
</comment>
<sequence length="181" mass="18923">MSIEQLKEQIPDFAKDVRLNLSSMASDESLSPQAKYGLFVACAIATRNPTVTAALEAVAAAHLSAAALTAAKTAAALMAMNNVYYRFVHLATNKEYATMPARLRMNAIANPGVDKADFELWSLAVSAINGCGTCIDAHERVLKEAGVSAASIQTAVRFAAIIQSVAVAIEAAAVTVPLAAE</sequence>
<proteinExistence type="inferred from homology"/>
<organism>
    <name type="scientific">Bradyrhizobium sp. (strain BTAi1 / ATCC BAA-1182)</name>
    <dbReference type="NCBI Taxonomy" id="288000"/>
    <lineage>
        <taxon>Bacteria</taxon>
        <taxon>Pseudomonadati</taxon>
        <taxon>Pseudomonadota</taxon>
        <taxon>Alphaproteobacteria</taxon>
        <taxon>Hyphomicrobiales</taxon>
        <taxon>Nitrobacteraceae</taxon>
        <taxon>Bradyrhizobium</taxon>
    </lineage>
</organism>